<keyword id="KW-1185">Reference proteome</keyword>
<keyword id="KW-0687">Ribonucleoprotein</keyword>
<keyword id="KW-0689">Ribosomal protein</keyword>
<proteinExistence type="inferred from homology"/>
<protein>
    <recommendedName>
        <fullName evidence="1">Large ribosomal subunit protein uL29</fullName>
    </recommendedName>
    <alternativeName>
        <fullName>50S ribosomal protein L29</fullName>
    </alternativeName>
</protein>
<sequence>MKANELKDKSVEQLNADLLDLLKAQFGLRMQNATGQLGKPSELKRVRRDIARIKTVLTEKGAK</sequence>
<feature type="chain" id="PRO_0000130427" description="Large ribosomal subunit protein uL29">
    <location>
        <begin position="1"/>
        <end position="63"/>
    </location>
</feature>
<organism>
    <name type="scientific">Neisseria meningitidis serogroup B (strain ATCC BAA-335 / MC58)</name>
    <dbReference type="NCBI Taxonomy" id="122586"/>
    <lineage>
        <taxon>Bacteria</taxon>
        <taxon>Pseudomonadati</taxon>
        <taxon>Pseudomonadota</taxon>
        <taxon>Betaproteobacteria</taxon>
        <taxon>Neisseriales</taxon>
        <taxon>Neisseriaceae</taxon>
        <taxon>Neisseria</taxon>
    </lineage>
</organism>
<evidence type="ECO:0000305" key="1"/>
<gene>
    <name type="primary">rpmC</name>
    <name type="ordered locus">NMB0150</name>
</gene>
<accession>P66169</accession>
<accession>Q9JQX4</accession>
<dbReference type="EMBL" id="AE002098">
    <property type="protein sequence ID" value="AAF40608.1"/>
    <property type="molecule type" value="Genomic_DNA"/>
</dbReference>
<dbReference type="PIR" id="H81231">
    <property type="entry name" value="H81231"/>
</dbReference>
<dbReference type="RefSeq" id="NP_273208.1">
    <property type="nucleotide sequence ID" value="NC_003112.2"/>
</dbReference>
<dbReference type="RefSeq" id="WP_002215432.1">
    <property type="nucleotide sequence ID" value="NC_003112.2"/>
</dbReference>
<dbReference type="SMR" id="P66169"/>
<dbReference type="FunCoup" id="P66169">
    <property type="interactions" value="438"/>
</dbReference>
<dbReference type="STRING" id="122586.NMB0150"/>
<dbReference type="PaxDb" id="122586-NMB0150"/>
<dbReference type="GeneID" id="93387225"/>
<dbReference type="KEGG" id="nme:NMB0150"/>
<dbReference type="PATRIC" id="fig|122586.8.peg.191"/>
<dbReference type="HOGENOM" id="CLU_158491_1_2_4"/>
<dbReference type="InParanoid" id="P66169"/>
<dbReference type="OrthoDB" id="9815192at2"/>
<dbReference type="Proteomes" id="UP000000425">
    <property type="component" value="Chromosome"/>
</dbReference>
<dbReference type="GO" id="GO:0022625">
    <property type="term" value="C:cytosolic large ribosomal subunit"/>
    <property type="evidence" value="ECO:0000318"/>
    <property type="project" value="GO_Central"/>
</dbReference>
<dbReference type="GO" id="GO:0003735">
    <property type="term" value="F:structural constituent of ribosome"/>
    <property type="evidence" value="ECO:0007669"/>
    <property type="project" value="InterPro"/>
</dbReference>
<dbReference type="GO" id="GO:0006412">
    <property type="term" value="P:translation"/>
    <property type="evidence" value="ECO:0007669"/>
    <property type="project" value="UniProtKB-UniRule"/>
</dbReference>
<dbReference type="CDD" id="cd00427">
    <property type="entry name" value="Ribosomal_L29_HIP"/>
    <property type="match status" value="1"/>
</dbReference>
<dbReference type="FunFam" id="1.10.287.310:FF:000001">
    <property type="entry name" value="50S ribosomal protein L29"/>
    <property type="match status" value="1"/>
</dbReference>
<dbReference type="Gene3D" id="1.10.287.310">
    <property type="match status" value="1"/>
</dbReference>
<dbReference type="HAMAP" id="MF_00374">
    <property type="entry name" value="Ribosomal_uL29"/>
    <property type="match status" value="1"/>
</dbReference>
<dbReference type="InterPro" id="IPR050063">
    <property type="entry name" value="Ribosomal_protein_uL29"/>
</dbReference>
<dbReference type="InterPro" id="IPR001854">
    <property type="entry name" value="Ribosomal_uL29"/>
</dbReference>
<dbReference type="InterPro" id="IPR018254">
    <property type="entry name" value="Ribosomal_uL29_CS"/>
</dbReference>
<dbReference type="InterPro" id="IPR036049">
    <property type="entry name" value="Ribosomal_uL29_sf"/>
</dbReference>
<dbReference type="NCBIfam" id="TIGR00012">
    <property type="entry name" value="L29"/>
    <property type="match status" value="1"/>
</dbReference>
<dbReference type="PANTHER" id="PTHR10916">
    <property type="entry name" value="60S RIBOSOMAL PROTEIN L35/50S RIBOSOMAL PROTEIN L29"/>
    <property type="match status" value="1"/>
</dbReference>
<dbReference type="PANTHER" id="PTHR10916:SF0">
    <property type="entry name" value="LARGE RIBOSOMAL SUBUNIT PROTEIN UL29C"/>
    <property type="match status" value="1"/>
</dbReference>
<dbReference type="Pfam" id="PF00831">
    <property type="entry name" value="Ribosomal_L29"/>
    <property type="match status" value="1"/>
</dbReference>
<dbReference type="SUPFAM" id="SSF46561">
    <property type="entry name" value="Ribosomal protein L29 (L29p)"/>
    <property type="match status" value="1"/>
</dbReference>
<dbReference type="PROSITE" id="PS00579">
    <property type="entry name" value="RIBOSOMAL_L29"/>
    <property type="match status" value="1"/>
</dbReference>
<reference key="1">
    <citation type="journal article" date="2000" name="Science">
        <title>Complete genome sequence of Neisseria meningitidis serogroup B strain MC58.</title>
        <authorList>
            <person name="Tettelin H."/>
            <person name="Saunders N.J."/>
            <person name="Heidelberg J.F."/>
            <person name="Jeffries A.C."/>
            <person name="Nelson K.E."/>
            <person name="Eisen J.A."/>
            <person name="Ketchum K.A."/>
            <person name="Hood D.W."/>
            <person name="Peden J.F."/>
            <person name="Dodson R.J."/>
            <person name="Nelson W.C."/>
            <person name="Gwinn M.L."/>
            <person name="DeBoy R.T."/>
            <person name="Peterson J.D."/>
            <person name="Hickey E.K."/>
            <person name="Haft D.H."/>
            <person name="Salzberg S.L."/>
            <person name="White O."/>
            <person name="Fleischmann R.D."/>
            <person name="Dougherty B.A."/>
            <person name="Mason T.M."/>
            <person name="Ciecko A."/>
            <person name="Parksey D.S."/>
            <person name="Blair E."/>
            <person name="Cittone H."/>
            <person name="Clark E.B."/>
            <person name="Cotton M.D."/>
            <person name="Utterback T.R."/>
            <person name="Khouri H.M."/>
            <person name="Qin H."/>
            <person name="Vamathevan J.J."/>
            <person name="Gill J."/>
            <person name="Scarlato V."/>
            <person name="Masignani V."/>
            <person name="Pizza M."/>
            <person name="Grandi G."/>
            <person name="Sun L."/>
            <person name="Smith H.O."/>
            <person name="Fraser C.M."/>
            <person name="Moxon E.R."/>
            <person name="Rappuoli R."/>
            <person name="Venter J.C."/>
        </authorList>
    </citation>
    <scope>NUCLEOTIDE SEQUENCE [LARGE SCALE GENOMIC DNA]</scope>
    <source>
        <strain>ATCC BAA-335 / MC58</strain>
    </source>
</reference>
<comment type="similarity">
    <text evidence="1">Belongs to the universal ribosomal protein uL29 family.</text>
</comment>
<name>RL29_NEIMB</name>